<dbReference type="EMBL" id="AE000516">
    <property type="protein sequence ID" value="AAK46176.1"/>
    <property type="molecule type" value="Genomic_DNA"/>
</dbReference>
<dbReference type="PIR" id="A70666">
    <property type="entry name" value="A70666"/>
</dbReference>
<dbReference type="RefSeq" id="WP_003409326.1">
    <property type="nucleotide sequence ID" value="NZ_KK341227.1"/>
</dbReference>
<dbReference type="SMR" id="P9WGU2"/>
<dbReference type="KEGG" id="mtc:MT1905"/>
<dbReference type="PATRIC" id="fig|83331.31.peg.2049"/>
<dbReference type="HOGENOM" id="CLU_065520_0_1_11"/>
<dbReference type="Proteomes" id="UP000001020">
    <property type="component" value="Chromosome"/>
</dbReference>
<dbReference type="GO" id="GO:0005886">
    <property type="term" value="C:plasma membrane"/>
    <property type="evidence" value="ECO:0007669"/>
    <property type="project" value="UniProtKB-SubCell"/>
</dbReference>
<dbReference type="GO" id="GO:0046872">
    <property type="term" value="F:metal ion binding"/>
    <property type="evidence" value="ECO:0007669"/>
    <property type="project" value="UniProtKB-KW"/>
</dbReference>
<dbReference type="GO" id="GO:0030973">
    <property type="term" value="F:molybdate ion binding"/>
    <property type="evidence" value="ECO:0000250"/>
    <property type="project" value="UniProtKB"/>
</dbReference>
<dbReference type="GO" id="GO:0015689">
    <property type="term" value="P:molybdate ion transport"/>
    <property type="evidence" value="ECO:0007669"/>
    <property type="project" value="InterPro"/>
</dbReference>
<dbReference type="CDD" id="cd13538">
    <property type="entry name" value="PBP2_ModA_like_1"/>
    <property type="match status" value="1"/>
</dbReference>
<dbReference type="FunFam" id="3.40.190.10:FF:000030">
    <property type="entry name" value="Molybdate ABC transporter substrate-binding protein"/>
    <property type="match status" value="1"/>
</dbReference>
<dbReference type="Gene3D" id="3.40.190.10">
    <property type="entry name" value="Periplasmic binding protein-like II"/>
    <property type="match status" value="2"/>
</dbReference>
<dbReference type="InterPro" id="IPR005950">
    <property type="entry name" value="ModA"/>
</dbReference>
<dbReference type="InterPro" id="IPR050682">
    <property type="entry name" value="ModA/WtpA"/>
</dbReference>
<dbReference type="NCBIfam" id="TIGR01256">
    <property type="entry name" value="modA"/>
    <property type="match status" value="1"/>
</dbReference>
<dbReference type="PANTHER" id="PTHR30632">
    <property type="entry name" value="MOLYBDATE-BINDING PERIPLASMIC PROTEIN"/>
    <property type="match status" value="1"/>
</dbReference>
<dbReference type="PANTHER" id="PTHR30632:SF0">
    <property type="entry name" value="SULFATE-BINDING PROTEIN"/>
    <property type="match status" value="1"/>
</dbReference>
<dbReference type="Pfam" id="PF13531">
    <property type="entry name" value="SBP_bac_11"/>
    <property type="match status" value="1"/>
</dbReference>
<dbReference type="PIRSF" id="PIRSF004846">
    <property type="entry name" value="ModA"/>
    <property type="match status" value="1"/>
</dbReference>
<dbReference type="SUPFAM" id="SSF53850">
    <property type="entry name" value="Periplasmic binding protein-like II"/>
    <property type="match status" value="1"/>
</dbReference>
<dbReference type="PROSITE" id="PS51257">
    <property type="entry name" value="PROKAR_LIPOPROTEIN"/>
    <property type="match status" value="1"/>
</dbReference>
<gene>
    <name type="primary">modA</name>
    <name type="ordered locus">MT1905</name>
</gene>
<evidence type="ECO:0000250" key="1"/>
<evidence type="ECO:0000250" key="2">
    <source>
        <dbReference type="UniProtKB" id="P37329"/>
    </source>
</evidence>
<evidence type="ECO:0000305" key="3"/>
<protein>
    <recommendedName>
        <fullName evidence="3">Molybdate-binding protein ModA</fullName>
    </recommendedName>
    <alternativeName>
        <fullName evidence="3">Molybdate/tungstate-binding protein ModA</fullName>
    </alternativeName>
</protein>
<sequence>MRWIGLSTGLVSAMLVAGLVACGSNSPASSPAGPTQGARSIVVFAAASLQSAFTQIGEQFKAGNPGVNVNFAFAGSSELATQLTQGATADVFASADTAQMDSVAKAGLLAGHPTNFATNTMVIVAAAGNPKKIRSFADLTRPGLNVVVCQPSVPCGSATRRIEDATGIHLNPVSEELSVTDVLNKVITGQADAGLVYVSDALSVATKVTCVRFPEAAGVVNVYAIAVLKRTSQPALARQFVAMVTAAAGRRILDQSGFAKP</sequence>
<proteinExistence type="inferred from homology"/>
<feature type="signal peptide" evidence="3">
    <location>
        <begin position="1"/>
        <end position="21"/>
    </location>
</feature>
<feature type="chain" id="PRO_0000428302" description="Molybdate-binding protein ModA">
    <location>
        <begin position="22"/>
        <end position="261"/>
    </location>
</feature>
<feature type="binding site" evidence="2">
    <location>
        <position position="48"/>
    </location>
    <ligand>
        <name>molybdate</name>
        <dbReference type="ChEBI" id="CHEBI:36264"/>
    </ligand>
</feature>
<feature type="binding site" evidence="2">
    <location>
        <position position="76"/>
    </location>
    <ligand>
        <name>molybdate</name>
        <dbReference type="ChEBI" id="CHEBI:36264"/>
    </ligand>
</feature>
<feature type="binding site" evidence="2">
    <location>
        <position position="179"/>
    </location>
    <ligand>
        <name>molybdate</name>
        <dbReference type="ChEBI" id="CHEBI:36264"/>
    </ligand>
</feature>
<feature type="binding site" evidence="2">
    <location>
        <position position="197"/>
    </location>
    <ligand>
        <name>molybdate</name>
        <dbReference type="ChEBI" id="CHEBI:36264"/>
    </ligand>
</feature>
<feature type="lipid moiety-binding region" description="N-palmitoyl cysteine" evidence="3">
    <location>
        <position position="22"/>
    </location>
</feature>
<feature type="lipid moiety-binding region" description="S-diacylglycerol cysteine" evidence="3">
    <location>
        <position position="22"/>
    </location>
</feature>
<comment type="function">
    <text evidence="1">Involved in the transport of molybdenum into the cell. Part of the binding-protein-dependent transport system ModABCD (By similarity).</text>
</comment>
<comment type="subunit">
    <text evidence="3">The complex is composed of two ATP-binding proteins (ModC), two transmembrane proteins (ModB) and a solute-binding protein (ModA).</text>
</comment>
<comment type="subcellular location">
    <subcellularLocation>
        <location evidence="3">Cell membrane</location>
        <topology evidence="3">Lipid-anchor</topology>
    </subcellularLocation>
</comment>
<comment type="similarity">
    <text evidence="3">Belongs to the bacterial solute-binding protein ModA family.</text>
</comment>
<reference key="1">
    <citation type="journal article" date="2002" name="J. Bacteriol.">
        <title>Whole-genome comparison of Mycobacterium tuberculosis clinical and laboratory strains.</title>
        <authorList>
            <person name="Fleischmann R.D."/>
            <person name="Alland D."/>
            <person name="Eisen J.A."/>
            <person name="Carpenter L."/>
            <person name="White O."/>
            <person name="Peterson J.D."/>
            <person name="DeBoy R.T."/>
            <person name="Dodson R.J."/>
            <person name="Gwinn M.L."/>
            <person name="Haft D.H."/>
            <person name="Hickey E.K."/>
            <person name="Kolonay J.F."/>
            <person name="Nelson W.C."/>
            <person name="Umayam L.A."/>
            <person name="Ermolaeva M.D."/>
            <person name="Salzberg S.L."/>
            <person name="Delcher A."/>
            <person name="Utterback T.R."/>
            <person name="Weidman J.F."/>
            <person name="Khouri H.M."/>
            <person name="Gill J."/>
            <person name="Mikula A."/>
            <person name="Bishai W."/>
            <person name="Jacobs W.R. Jr."/>
            <person name="Venter J.C."/>
            <person name="Fraser C.M."/>
        </authorList>
    </citation>
    <scope>NUCLEOTIDE SEQUENCE [LARGE SCALE GENOMIC DNA]</scope>
    <source>
        <strain>CDC 1551 / Oshkosh</strain>
    </source>
</reference>
<accession>P9WGU2</accession>
<accession>L0T833</accession>
<accession>O05125</accession>
<accession>P0A5Y0</accession>
<accession>P95157</accession>
<organism>
    <name type="scientific">Mycobacterium tuberculosis (strain CDC 1551 / Oshkosh)</name>
    <dbReference type="NCBI Taxonomy" id="83331"/>
    <lineage>
        <taxon>Bacteria</taxon>
        <taxon>Bacillati</taxon>
        <taxon>Actinomycetota</taxon>
        <taxon>Actinomycetes</taxon>
        <taxon>Mycobacteriales</taxon>
        <taxon>Mycobacteriaceae</taxon>
        <taxon>Mycobacterium</taxon>
        <taxon>Mycobacterium tuberculosis complex</taxon>
    </lineage>
</organism>
<keyword id="KW-1003">Cell membrane</keyword>
<keyword id="KW-0449">Lipoprotein</keyword>
<keyword id="KW-0472">Membrane</keyword>
<keyword id="KW-0479">Metal-binding</keyword>
<keyword id="KW-0500">Molybdenum</keyword>
<keyword id="KW-0564">Palmitate</keyword>
<keyword id="KW-1185">Reference proteome</keyword>
<keyword id="KW-0732">Signal</keyword>
<keyword id="KW-0813">Transport</keyword>
<keyword id="KW-0826">Tungsten</keyword>
<name>MODA_MYCTO</name>